<reference key="1">
    <citation type="journal article" date="2004" name="Nucleic Acids Res.">
        <title>The genome sequence of Bacillus cereus ATCC 10987 reveals metabolic adaptations and a large plasmid related to Bacillus anthracis pXO1.</title>
        <authorList>
            <person name="Rasko D.A."/>
            <person name="Ravel J."/>
            <person name="Oekstad O.A."/>
            <person name="Helgason E."/>
            <person name="Cer R.Z."/>
            <person name="Jiang L."/>
            <person name="Shores K.A."/>
            <person name="Fouts D.E."/>
            <person name="Tourasse N.J."/>
            <person name="Angiuoli S.V."/>
            <person name="Kolonay J.F."/>
            <person name="Nelson W.C."/>
            <person name="Kolstoe A.-B."/>
            <person name="Fraser C.M."/>
            <person name="Read T.D."/>
        </authorList>
    </citation>
    <scope>NUCLEOTIDE SEQUENCE [LARGE SCALE GENOMIC DNA]</scope>
    <source>
        <strain>ATCC 10987 / NRS 248</strain>
    </source>
</reference>
<evidence type="ECO:0000255" key="1">
    <source>
        <dbReference type="HAMAP-Rule" id="MF_00494"/>
    </source>
</evidence>
<dbReference type="EC" id="2.2.1.2" evidence="1"/>
<dbReference type="EMBL" id="AE017194">
    <property type="protein sequence ID" value="AAS39671.1"/>
    <property type="molecule type" value="Genomic_DNA"/>
</dbReference>
<dbReference type="SMR" id="Q73DH4"/>
<dbReference type="KEGG" id="bca:BCE_0738"/>
<dbReference type="HOGENOM" id="CLU_079764_0_0_9"/>
<dbReference type="UniPathway" id="UPA00115">
    <property type="reaction ID" value="UER00414"/>
</dbReference>
<dbReference type="Proteomes" id="UP000002527">
    <property type="component" value="Chromosome"/>
</dbReference>
<dbReference type="GO" id="GO:0005737">
    <property type="term" value="C:cytoplasm"/>
    <property type="evidence" value="ECO:0007669"/>
    <property type="project" value="UniProtKB-SubCell"/>
</dbReference>
<dbReference type="GO" id="GO:0016832">
    <property type="term" value="F:aldehyde-lyase activity"/>
    <property type="evidence" value="ECO:0007669"/>
    <property type="project" value="InterPro"/>
</dbReference>
<dbReference type="GO" id="GO:0004801">
    <property type="term" value="F:transaldolase activity"/>
    <property type="evidence" value="ECO:0007669"/>
    <property type="project" value="UniProtKB-UniRule"/>
</dbReference>
<dbReference type="GO" id="GO:0005975">
    <property type="term" value="P:carbohydrate metabolic process"/>
    <property type="evidence" value="ECO:0007669"/>
    <property type="project" value="InterPro"/>
</dbReference>
<dbReference type="GO" id="GO:0006098">
    <property type="term" value="P:pentose-phosphate shunt"/>
    <property type="evidence" value="ECO:0007669"/>
    <property type="project" value="UniProtKB-UniRule"/>
</dbReference>
<dbReference type="CDD" id="cd00956">
    <property type="entry name" value="Transaldolase_FSA"/>
    <property type="match status" value="1"/>
</dbReference>
<dbReference type="FunFam" id="3.20.20.70:FF:000018">
    <property type="entry name" value="Probable transaldolase"/>
    <property type="match status" value="1"/>
</dbReference>
<dbReference type="Gene3D" id="3.20.20.70">
    <property type="entry name" value="Aldolase class I"/>
    <property type="match status" value="1"/>
</dbReference>
<dbReference type="HAMAP" id="MF_00494">
    <property type="entry name" value="Transaldolase_3b"/>
    <property type="match status" value="1"/>
</dbReference>
<dbReference type="InterPro" id="IPR013785">
    <property type="entry name" value="Aldolase_TIM"/>
</dbReference>
<dbReference type="InterPro" id="IPR001585">
    <property type="entry name" value="TAL/FSA"/>
</dbReference>
<dbReference type="InterPro" id="IPR022999">
    <property type="entry name" value="Transaldolase_3B"/>
</dbReference>
<dbReference type="InterPro" id="IPR004731">
    <property type="entry name" value="Transaldolase_3B/F6P_aldolase"/>
</dbReference>
<dbReference type="InterPro" id="IPR018225">
    <property type="entry name" value="Transaldolase_AS"/>
</dbReference>
<dbReference type="InterPro" id="IPR033919">
    <property type="entry name" value="TSA/FSA_arc/bac"/>
</dbReference>
<dbReference type="NCBIfam" id="TIGR00875">
    <property type="entry name" value="fsa_talC_mipB"/>
    <property type="match status" value="1"/>
</dbReference>
<dbReference type="PANTHER" id="PTHR10683">
    <property type="entry name" value="TRANSALDOLASE"/>
    <property type="match status" value="1"/>
</dbReference>
<dbReference type="PANTHER" id="PTHR10683:SF36">
    <property type="entry name" value="TRANSALDOLASE"/>
    <property type="match status" value="1"/>
</dbReference>
<dbReference type="Pfam" id="PF00923">
    <property type="entry name" value="TAL_FSA"/>
    <property type="match status" value="1"/>
</dbReference>
<dbReference type="SUPFAM" id="SSF51569">
    <property type="entry name" value="Aldolase"/>
    <property type="match status" value="1"/>
</dbReference>
<dbReference type="PROSITE" id="PS01054">
    <property type="entry name" value="TRANSALDOLASE_1"/>
    <property type="match status" value="1"/>
</dbReference>
<dbReference type="PROSITE" id="PS00958">
    <property type="entry name" value="TRANSALDOLASE_2"/>
    <property type="match status" value="1"/>
</dbReference>
<keyword id="KW-0963">Cytoplasm</keyword>
<keyword id="KW-0570">Pentose shunt</keyword>
<keyword id="KW-0704">Schiff base</keyword>
<keyword id="KW-0808">Transferase</keyword>
<protein>
    <recommendedName>
        <fullName evidence="1">Probable transaldolase</fullName>
        <ecNumber evidence="1">2.2.1.2</ecNumber>
    </recommendedName>
</protein>
<feature type="chain" id="PRO_1000060456" description="Probable transaldolase">
    <location>
        <begin position="1"/>
        <end position="215"/>
    </location>
</feature>
<feature type="active site" description="Schiff-base intermediate with substrate" evidence="1">
    <location>
        <position position="83"/>
    </location>
</feature>
<name>TAL_BACC1</name>
<sequence length="215" mass="23069">MKFFIDTANINEIKEANALGVLAGVTTNPSLVAKEGVDFHERIREICNVVEGPVSAEVISLEADKMIEEGKELAKIAPNVVVKVPMTTEGLKAVKAFSDLGIRTNVTLVFSAVQALLAARAGATYVSPFLGRLDDIGHNGMDLIRQIAEIFAIHGIETEIIAASVRHSVHVTDAALNGAHIATIPANVIASLVKHPLTDQGIEKFLADWEKTQEK</sequence>
<comment type="function">
    <text evidence="1">Transaldolase is important for the balance of metabolites in the pentose-phosphate pathway.</text>
</comment>
<comment type="catalytic activity">
    <reaction evidence="1">
        <text>D-sedoheptulose 7-phosphate + D-glyceraldehyde 3-phosphate = D-erythrose 4-phosphate + beta-D-fructose 6-phosphate</text>
        <dbReference type="Rhea" id="RHEA:17053"/>
        <dbReference type="ChEBI" id="CHEBI:16897"/>
        <dbReference type="ChEBI" id="CHEBI:57483"/>
        <dbReference type="ChEBI" id="CHEBI:57634"/>
        <dbReference type="ChEBI" id="CHEBI:59776"/>
        <dbReference type="EC" id="2.2.1.2"/>
    </reaction>
</comment>
<comment type="pathway">
    <text evidence="1">Carbohydrate degradation; pentose phosphate pathway; D-glyceraldehyde 3-phosphate and beta-D-fructose 6-phosphate from D-ribose 5-phosphate and D-xylulose 5-phosphate (non-oxidative stage): step 2/3.</text>
</comment>
<comment type="subcellular location">
    <subcellularLocation>
        <location evidence="1">Cytoplasm</location>
    </subcellularLocation>
</comment>
<comment type="similarity">
    <text evidence="1">Belongs to the transaldolase family. Type 3B subfamily.</text>
</comment>
<gene>
    <name evidence="1" type="primary">tal</name>
    <name type="ordered locus">BCE_0738</name>
</gene>
<organism>
    <name type="scientific">Bacillus cereus (strain ATCC 10987 / NRS 248)</name>
    <dbReference type="NCBI Taxonomy" id="222523"/>
    <lineage>
        <taxon>Bacteria</taxon>
        <taxon>Bacillati</taxon>
        <taxon>Bacillota</taxon>
        <taxon>Bacilli</taxon>
        <taxon>Bacillales</taxon>
        <taxon>Bacillaceae</taxon>
        <taxon>Bacillus</taxon>
        <taxon>Bacillus cereus group</taxon>
    </lineage>
</organism>
<accession>Q73DH4</accession>
<proteinExistence type="inferred from homology"/>